<organism>
    <name type="scientific">Shewanella sp. (strain MR-7)</name>
    <dbReference type="NCBI Taxonomy" id="60481"/>
    <lineage>
        <taxon>Bacteria</taxon>
        <taxon>Pseudomonadati</taxon>
        <taxon>Pseudomonadota</taxon>
        <taxon>Gammaproteobacteria</taxon>
        <taxon>Alteromonadales</taxon>
        <taxon>Shewanellaceae</taxon>
        <taxon>Shewanella</taxon>
    </lineage>
</organism>
<sequence>MPRRRVVGQRKILPDPKFHSELLAKFINVIMQDGKKSTAEKIIYKALDVIAEKKGANHLDILEAALDNVRPSVEVKSRRVGGSTYQVPCEVRPVRRNALAMRWLVEAARKRGEKSMALRLAGEMLDASENKGTAVKKREDVHRMAEANKAFAHYRW</sequence>
<keyword id="KW-0687">Ribonucleoprotein</keyword>
<keyword id="KW-0689">Ribosomal protein</keyword>
<keyword id="KW-0694">RNA-binding</keyword>
<keyword id="KW-0699">rRNA-binding</keyword>
<keyword id="KW-0820">tRNA-binding</keyword>
<feature type="chain" id="PRO_1000014289" description="Small ribosomal subunit protein uS7">
    <location>
        <begin position="1"/>
        <end position="156"/>
    </location>
</feature>
<gene>
    <name evidence="1" type="primary">rpsG</name>
    <name type="ordered locus">Shewmr7_0190</name>
</gene>
<evidence type="ECO:0000255" key="1">
    <source>
        <dbReference type="HAMAP-Rule" id="MF_00480"/>
    </source>
</evidence>
<evidence type="ECO:0000305" key="2"/>
<comment type="function">
    <text evidence="1">One of the primary rRNA binding proteins, it binds directly to 16S rRNA where it nucleates assembly of the head domain of the 30S subunit. Is located at the subunit interface close to the decoding center, probably blocks exit of the E-site tRNA.</text>
</comment>
<comment type="subunit">
    <text evidence="1">Part of the 30S ribosomal subunit. Contacts proteins S9 and S11.</text>
</comment>
<comment type="similarity">
    <text evidence="1">Belongs to the universal ribosomal protein uS7 family.</text>
</comment>
<protein>
    <recommendedName>
        <fullName evidence="1">Small ribosomal subunit protein uS7</fullName>
    </recommendedName>
    <alternativeName>
        <fullName evidence="2">30S ribosomal protein S7</fullName>
    </alternativeName>
</protein>
<reference key="1">
    <citation type="submission" date="2006-08" db="EMBL/GenBank/DDBJ databases">
        <title>Complete sequence of chromosome 1 of Shewanella sp. MR-7.</title>
        <authorList>
            <person name="Copeland A."/>
            <person name="Lucas S."/>
            <person name="Lapidus A."/>
            <person name="Barry K."/>
            <person name="Detter J.C."/>
            <person name="Glavina del Rio T."/>
            <person name="Hammon N."/>
            <person name="Israni S."/>
            <person name="Dalin E."/>
            <person name="Tice H."/>
            <person name="Pitluck S."/>
            <person name="Kiss H."/>
            <person name="Brettin T."/>
            <person name="Bruce D."/>
            <person name="Han C."/>
            <person name="Tapia R."/>
            <person name="Gilna P."/>
            <person name="Schmutz J."/>
            <person name="Larimer F."/>
            <person name="Land M."/>
            <person name="Hauser L."/>
            <person name="Kyrpides N."/>
            <person name="Mikhailova N."/>
            <person name="Nealson K."/>
            <person name="Konstantinidis K."/>
            <person name="Klappenbach J."/>
            <person name="Tiedje J."/>
            <person name="Richardson P."/>
        </authorList>
    </citation>
    <scope>NUCLEOTIDE SEQUENCE [LARGE SCALE GENOMIC DNA]</scope>
    <source>
        <strain>MR-7</strain>
    </source>
</reference>
<accession>Q0I0A9</accession>
<name>RS7_SHESR</name>
<proteinExistence type="inferred from homology"/>
<dbReference type="EMBL" id="CP000444">
    <property type="protein sequence ID" value="ABI41196.1"/>
    <property type="molecule type" value="Genomic_DNA"/>
</dbReference>
<dbReference type="SMR" id="Q0I0A9"/>
<dbReference type="KEGG" id="shm:Shewmr7_0190"/>
<dbReference type="HOGENOM" id="CLU_072226_1_1_6"/>
<dbReference type="GO" id="GO:0015935">
    <property type="term" value="C:small ribosomal subunit"/>
    <property type="evidence" value="ECO:0007669"/>
    <property type="project" value="InterPro"/>
</dbReference>
<dbReference type="GO" id="GO:0019843">
    <property type="term" value="F:rRNA binding"/>
    <property type="evidence" value="ECO:0007669"/>
    <property type="project" value="UniProtKB-UniRule"/>
</dbReference>
<dbReference type="GO" id="GO:0003735">
    <property type="term" value="F:structural constituent of ribosome"/>
    <property type="evidence" value="ECO:0007669"/>
    <property type="project" value="InterPro"/>
</dbReference>
<dbReference type="GO" id="GO:0000049">
    <property type="term" value="F:tRNA binding"/>
    <property type="evidence" value="ECO:0007669"/>
    <property type="project" value="UniProtKB-UniRule"/>
</dbReference>
<dbReference type="GO" id="GO:0006412">
    <property type="term" value="P:translation"/>
    <property type="evidence" value="ECO:0007669"/>
    <property type="project" value="UniProtKB-UniRule"/>
</dbReference>
<dbReference type="CDD" id="cd14869">
    <property type="entry name" value="uS7_Bacteria"/>
    <property type="match status" value="1"/>
</dbReference>
<dbReference type="FunFam" id="1.10.455.10:FF:000001">
    <property type="entry name" value="30S ribosomal protein S7"/>
    <property type="match status" value="1"/>
</dbReference>
<dbReference type="Gene3D" id="1.10.455.10">
    <property type="entry name" value="Ribosomal protein S7 domain"/>
    <property type="match status" value="1"/>
</dbReference>
<dbReference type="HAMAP" id="MF_00480_B">
    <property type="entry name" value="Ribosomal_uS7_B"/>
    <property type="match status" value="1"/>
</dbReference>
<dbReference type="InterPro" id="IPR000235">
    <property type="entry name" value="Ribosomal_uS7"/>
</dbReference>
<dbReference type="InterPro" id="IPR005717">
    <property type="entry name" value="Ribosomal_uS7_bac/org-type"/>
</dbReference>
<dbReference type="InterPro" id="IPR020606">
    <property type="entry name" value="Ribosomal_uS7_CS"/>
</dbReference>
<dbReference type="InterPro" id="IPR023798">
    <property type="entry name" value="Ribosomal_uS7_dom"/>
</dbReference>
<dbReference type="InterPro" id="IPR036823">
    <property type="entry name" value="Ribosomal_uS7_dom_sf"/>
</dbReference>
<dbReference type="NCBIfam" id="TIGR01029">
    <property type="entry name" value="rpsG_bact"/>
    <property type="match status" value="1"/>
</dbReference>
<dbReference type="PANTHER" id="PTHR11205">
    <property type="entry name" value="RIBOSOMAL PROTEIN S7"/>
    <property type="match status" value="1"/>
</dbReference>
<dbReference type="Pfam" id="PF00177">
    <property type="entry name" value="Ribosomal_S7"/>
    <property type="match status" value="1"/>
</dbReference>
<dbReference type="PIRSF" id="PIRSF002122">
    <property type="entry name" value="RPS7p_RPS7a_RPS5e_RPS7o"/>
    <property type="match status" value="1"/>
</dbReference>
<dbReference type="SUPFAM" id="SSF47973">
    <property type="entry name" value="Ribosomal protein S7"/>
    <property type="match status" value="1"/>
</dbReference>
<dbReference type="PROSITE" id="PS00052">
    <property type="entry name" value="RIBOSOMAL_S7"/>
    <property type="match status" value="1"/>
</dbReference>